<name>GLYA_THERP</name>
<reference key="1">
    <citation type="journal article" date="2009" name="PLoS ONE">
        <title>Complete genome sequence of the aerobic CO-oxidizing thermophile Thermomicrobium roseum.</title>
        <authorList>
            <person name="Wu D."/>
            <person name="Raymond J."/>
            <person name="Wu M."/>
            <person name="Chatterji S."/>
            <person name="Ren Q."/>
            <person name="Graham J.E."/>
            <person name="Bryant D.A."/>
            <person name="Robb F."/>
            <person name="Colman A."/>
            <person name="Tallon L.J."/>
            <person name="Badger J.H."/>
            <person name="Madupu R."/>
            <person name="Ward N.L."/>
            <person name="Eisen J.A."/>
        </authorList>
    </citation>
    <scope>NUCLEOTIDE SEQUENCE [LARGE SCALE GENOMIC DNA]</scope>
    <source>
        <strain>ATCC 27502 / DSM 5159 / P-2</strain>
    </source>
</reference>
<proteinExistence type="inferred from homology"/>
<evidence type="ECO:0000255" key="1">
    <source>
        <dbReference type="HAMAP-Rule" id="MF_00051"/>
    </source>
</evidence>
<evidence type="ECO:0000256" key="2">
    <source>
        <dbReference type="SAM" id="MobiDB-lite"/>
    </source>
</evidence>
<feature type="chain" id="PRO_1000117657" description="Serine hydroxymethyltransferase">
    <location>
        <begin position="1"/>
        <end position="426"/>
    </location>
</feature>
<feature type="region of interest" description="Disordered" evidence="2">
    <location>
        <begin position="342"/>
        <end position="368"/>
    </location>
</feature>
<feature type="binding site" evidence="1">
    <location>
        <position position="118"/>
    </location>
    <ligand>
        <name>(6S)-5,6,7,8-tetrahydrofolate</name>
        <dbReference type="ChEBI" id="CHEBI:57453"/>
    </ligand>
</feature>
<feature type="binding site" evidence="1">
    <location>
        <begin position="122"/>
        <end position="124"/>
    </location>
    <ligand>
        <name>(6S)-5,6,7,8-tetrahydrofolate</name>
        <dbReference type="ChEBI" id="CHEBI:57453"/>
    </ligand>
</feature>
<feature type="site" description="Plays an important role in substrate specificity" evidence="1">
    <location>
        <position position="226"/>
    </location>
</feature>
<feature type="modified residue" description="N6-(pyridoxal phosphate)lysine" evidence="1">
    <location>
        <position position="227"/>
    </location>
</feature>
<accession>B9KZ44</accession>
<keyword id="KW-0028">Amino-acid biosynthesis</keyword>
<keyword id="KW-0963">Cytoplasm</keyword>
<keyword id="KW-0554">One-carbon metabolism</keyword>
<keyword id="KW-0663">Pyridoxal phosphate</keyword>
<keyword id="KW-1185">Reference proteome</keyword>
<keyword id="KW-0808">Transferase</keyword>
<protein>
    <recommendedName>
        <fullName evidence="1">Serine hydroxymethyltransferase</fullName>
        <shortName evidence="1">SHMT</shortName>
        <shortName evidence="1">Serine methylase</shortName>
        <ecNumber evidence="1">2.1.2.1</ecNumber>
    </recommendedName>
</protein>
<organism>
    <name type="scientific">Thermomicrobium roseum (strain ATCC 27502 / DSM 5159 / P-2)</name>
    <dbReference type="NCBI Taxonomy" id="309801"/>
    <lineage>
        <taxon>Bacteria</taxon>
        <taxon>Pseudomonadati</taxon>
        <taxon>Thermomicrobiota</taxon>
        <taxon>Thermomicrobia</taxon>
        <taxon>Thermomicrobiales</taxon>
        <taxon>Thermomicrobiaceae</taxon>
        <taxon>Thermomicrobium</taxon>
    </lineage>
</organism>
<dbReference type="EC" id="2.1.2.1" evidence="1"/>
<dbReference type="EMBL" id="CP001275">
    <property type="protein sequence ID" value="ACM04820.1"/>
    <property type="molecule type" value="Genomic_DNA"/>
</dbReference>
<dbReference type="RefSeq" id="WP_012642143.1">
    <property type="nucleotide sequence ID" value="NC_011959.1"/>
</dbReference>
<dbReference type="SMR" id="B9KZ44"/>
<dbReference type="STRING" id="309801.trd_0755"/>
<dbReference type="KEGG" id="tro:trd_0755"/>
<dbReference type="eggNOG" id="COG0112">
    <property type="taxonomic scope" value="Bacteria"/>
</dbReference>
<dbReference type="HOGENOM" id="CLU_022477_2_1_0"/>
<dbReference type="OrthoDB" id="9803846at2"/>
<dbReference type="UniPathway" id="UPA00193"/>
<dbReference type="UniPathway" id="UPA00288">
    <property type="reaction ID" value="UER01023"/>
</dbReference>
<dbReference type="Proteomes" id="UP000000447">
    <property type="component" value="Chromosome"/>
</dbReference>
<dbReference type="GO" id="GO:0005829">
    <property type="term" value="C:cytosol"/>
    <property type="evidence" value="ECO:0007669"/>
    <property type="project" value="TreeGrafter"/>
</dbReference>
<dbReference type="GO" id="GO:0004372">
    <property type="term" value="F:glycine hydroxymethyltransferase activity"/>
    <property type="evidence" value="ECO:0007669"/>
    <property type="project" value="UniProtKB-UniRule"/>
</dbReference>
<dbReference type="GO" id="GO:0030170">
    <property type="term" value="F:pyridoxal phosphate binding"/>
    <property type="evidence" value="ECO:0007669"/>
    <property type="project" value="UniProtKB-UniRule"/>
</dbReference>
<dbReference type="GO" id="GO:0019264">
    <property type="term" value="P:glycine biosynthetic process from serine"/>
    <property type="evidence" value="ECO:0007669"/>
    <property type="project" value="UniProtKB-UniRule"/>
</dbReference>
<dbReference type="GO" id="GO:0035999">
    <property type="term" value="P:tetrahydrofolate interconversion"/>
    <property type="evidence" value="ECO:0007669"/>
    <property type="project" value="UniProtKB-UniRule"/>
</dbReference>
<dbReference type="CDD" id="cd00378">
    <property type="entry name" value="SHMT"/>
    <property type="match status" value="1"/>
</dbReference>
<dbReference type="FunFam" id="3.40.640.10:FF:000001">
    <property type="entry name" value="Serine hydroxymethyltransferase"/>
    <property type="match status" value="1"/>
</dbReference>
<dbReference type="FunFam" id="3.90.1150.10:FF:000003">
    <property type="entry name" value="Serine hydroxymethyltransferase"/>
    <property type="match status" value="1"/>
</dbReference>
<dbReference type="Gene3D" id="3.90.1150.10">
    <property type="entry name" value="Aspartate Aminotransferase, domain 1"/>
    <property type="match status" value="1"/>
</dbReference>
<dbReference type="Gene3D" id="3.40.640.10">
    <property type="entry name" value="Type I PLP-dependent aspartate aminotransferase-like (Major domain)"/>
    <property type="match status" value="1"/>
</dbReference>
<dbReference type="HAMAP" id="MF_00051">
    <property type="entry name" value="SHMT"/>
    <property type="match status" value="1"/>
</dbReference>
<dbReference type="InterPro" id="IPR015424">
    <property type="entry name" value="PyrdxlP-dep_Trfase"/>
</dbReference>
<dbReference type="InterPro" id="IPR015421">
    <property type="entry name" value="PyrdxlP-dep_Trfase_major"/>
</dbReference>
<dbReference type="InterPro" id="IPR015422">
    <property type="entry name" value="PyrdxlP-dep_Trfase_small"/>
</dbReference>
<dbReference type="InterPro" id="IPR001085">
    <property type="entry name" value="Ser_HO-MeTrfase"/>
</dbReference>
<dbReference type="InterPro" id="IPR049943">
    <property type="entry name" value="Ser_HO-MeTrfase-like"/>
</dbReference>
<dbReference type="InterPro" id="IPR039429">
    <property type="entry name" value="SHMT-like_dom"/>
</dbReference>
<dbReference type="NCBIfam" id="NF000586">
    <property type="entry name" value="PRK00011.1"/>
    <property type="match status" value="1"/>
</dbReference>
<dbReference type="PANTHER" id="PTHR11680">
    <property type="entry name" value="SERINE HYDROXYMETHYLTRANSFERASE"/>
    <property type="match status" value="1"/>
</dbReference>
<dbReference type="PANTHER" id="PTHR11680:SF35">
    <property type="entry name" value="SERINE HYDROXYMETHYLTRANSFERASE 1"/>
    <property type="match status" value="1"/>
</dbReference>
<dbReference type="Pfam" id="PF00464">
    <property type="entry name" value="SHMT"/>
    <property type="match status" value="1"/>
</dbReference>
<dbReference type="PIRSF" id="PIRSF000412">
    <property type="entry name" value="SHMT"/>
    <property type="match status" value="1"/>
</dbReference>
<dbReference type="SUPFAM" id="SSF53383">
    <property type="entry name" value="PLP-dependent transferases"/>
    <property type="match status" value="1"/>
</dbReference>
<sequence length="426" mass="46241">MDERLWEWDFEVAEAIACEERRQSRTIELIASENFTSPAVLAAVGSVLTNKYAEGYPGRRYYGGCECVDRVEELAIQRAKQLFGAPHVNVQPHSGAQANMAAYFAVLQPGDRILGMSLQHGGHLTHGAKVNLSGRWFEVAFYGVDPETERIDYDAVWHIAREIRPKLIISGASAYPRVIDFARLREIADDVGAILMADIAHIAGLVAVGLHPSPIGVAQLVTTTTHKTLRGSRGGMIMCDAEFAEAVDKAVFPGTQGGPLMHVIAGKAVALGEALRPTFRTYIERVLENARVLAETLQAEGFRLVSGGTDNHLLLVDLRSHGLSGRKAERVLDEVGITVNKNTIPNDPKPPTQASGIRLGTPAMTTRGFGPDEMRLTARWIADVLRAPDDESVKARVRAEVAELVSRFPVPGVTIEARTGVDDGTV</sequence>
<gene>
    <name evidence="1" type="primary">glyA</name>
    <name type="ordered locus">trd_0755</name>
</gene>
<comment type="function">
    <text evidence="1">Catalyzes the reversible interconversion of serine and glycine with tetrahydrofolate (THF) serving as the one-carbon carrier. This reaction serves as the major source of one-carbon groups required for the biosynthesis of purines, thymidylate, methionine, and other important biomolecules. Also exhibits THF-independent aldolase activity toward beta-hydroxyamino acids, producing glycine and aldehydes, via a retro-aldol mechanism.</text>
</comment>
<comment type="catalytic activity">
    <reaction evidence="1">
        <text>(6R)-5,10-methylene-5,6,7,8-tetrahydrofolate + glycine + H2O = (6S)-5,6,7,8-tetrahydrofolate + L-serine</text>
        <dbReference type="Rhea" id="RHEA:15481"/>
        <dbReference type="ChEBI" id="CHEBI:15377"/>
        <dbReference type="ChEBI" id="CHEBI:15636"/>
        <dbReference type="ChEBI" id="CHEBI:33384"/>
        <dbReference type="ChEBI" id="CHEBI:57305"/>
        <dbReference type="ChEBI" id="CHEBI:57453"/>
        <dbReference type="EC" id="2.1.2.1"/>
    </reaction>
</comment>
<comment type="cofactor">
    <cofactor evidence="1">
        <name>pyridoxal 5'-phosphate</name>
        <dbReference type="ChEBI" id="CHEBI:597326"/>
    </cofactor>
</comment>
<comment type="pathway">
    <text evidence="1">One-carbon metabolism; tetrahydrofolate interconversion.</text>
</comment>
<comment type="pathway">
    <text evidence="1">Amino-acid biosynthesis; glycine biosynthesis; glycine from L-serine: step 1/1.</text>
</comment>
<comment type="subunit">
    <text evidence="1">Homodimer.</text>
</comment>
<comment type="subcellular location">
    <subcellularLocation>
        <location evidence="1">Cytoplasm</location>
    </subcellularLocation>
</comment>
<comment type="similarity">
    <text evidence="1">Belongs to the SHMT family.</text>
</comment>